<evidence type="ECO:0000255" key="1">
    <source>
        <dbReference type="HAMAP-Rule" id="MF_01633"/>
    </source>
</evidence>
<evidence type="ECO:0000305" key="2"/>
<name>QUEC_XYLFA</name>
<feature type="chain" id="PRO_0000246967" description="7-cyano-7-deazaguanine synthase">
    <location>
        <begin position="1"/>
        <end position="230"/>
    </location>
</feature>
<feature type="binding site" evidence="1">
    <location>
        <begin position="8"/>
        <end position="18"/>
    </location>
    <ligand>
        <name>ATP</name>
        <dbReference type="ChEBI" id="CHEBI:30616"/>
    </ligand>
</feature>
<feature type="binding site" evidence="1">
    <location>
        <position position="186"/>
    </location>
    <ligand>
        <name>Zn(2+)</name>
        <dbReference type="ChEBI" id="CHEBI:29105"/>
    </ligand>
</feature>
<feature type="binding site" evidence="1">
    <location>
        <position position="196"/>
    </location>
    <ligand>
        <name>Zn(2+)</name>
        <dbReference type="ChEBI" id="CHEBI:29105"/>
    </ligand>
</feature>
<feature type="binding site" evidence="1">
    <location>
        <position position="199"/>
    </location>
    <ligand>
        <name>Zn(2+)</name>
        <dbReference type="ChEBI" id="CHEBI:29105"/>
    </ligand>
</feature>
<feature type="binding site" evidence="1">
    <location>
        <position position="202"/>
    </location>
    <ligand>
        <name>Zn(2+)</name>
        <dbReference type="ChEBI" id="CHEBI:29105"/>
    </ligand>
</feature>
<gene>
    <name evidence="1" type="primary">queC</name>
    <name type="ordered locus">XF_1858</name>
</gene>
<sequence length="230" mass="24254">MKKAVVLLSGGMDSAVVTAIAQSQGFMVHALSIRYGQRHTSELDAAVRIARVLNVAAHKVVDVDLRSIGGSALTDDIEIPDAGGKGIPVTYVPARNTIMLSLALGWAEVIGAADIFCGVNAVDYSGYPDCRPQFITAFETLANLATKVGVEGTQLHVHAPLQFLSKAEIVHEGVLHGVDFGLTVSCYRADVDGRACGRCDACKLRAAGFADAGVADPTRYMELPCSLLLL</sequence>
<dbReference type="EC" id="6.3.4.20" evidence="1"/>
<dbReference type="EMBL" id="AE003849">
    <property type="protein sequence ID" value="AAF84664.1"/>
    <property type="status" value="ALT_INIT"/>
    <property type="molecule type" value="Genomic_DNA"/>
</dbReference>
<dbReference type="PIR" id="B82628">
    <property type="entry name" value="B82628"/>
</dbReference>
<dbReference type="RefSeq" id="WP_031336589.1">
    <property type="nucleotide sequence ID" value="NC_002488.3"/>
</dbReference>
<dbReference type="SMR" id="Q9PCC3"/>
<dbReference type="STRING" id="160492.XF_1858"/>
<dbReference type="KEGG" id="xfa:XF_1858"/>
<dbReference type="eggNOG" id="COG0603">
    <property type="taxonomic scope" value="Bacteria"/>
</dbReference>
<dbReference type="HOGENOM" id="CLU_081854_1_1_6"/>
<dbReference type="UniPathway" id="UPA00391"/>
<dbReference type="Proteomes" id="UP000000812">
    <property type="component" value="Chromosome"/>
</dbReference>
<dbReference type="GO" id="GO:0005524">
    <property type="term" value="F:ATP binding"/>
    <property type="evidence" value="ECO:0007669"/>
    <property type="project" value="UniProtKB-UniRule"/>
</dbReference>
<dbReference type="GO" id="GO:0016879">
    <property type="term" value="F:ligase activity, forming carbon-nitrogen bonds"/>
    <property type="evidence" value="ECO:0007669"/>
    <property type="project" value="UniProtKB-UniRule"/>
</dbReference>
<dbReference type="GO" id="GO:0008270">
    <property type="term" value="F:zinc ion binding"/>
    <property type="evidence" value="ECO:0007669"/>
    <property type="project" value="UniProtKB-UniRule"/>
</dbReference>
<dbReference type="GO" id="GO:0008616">
    <property type="term" value="P:queuosine biosynthetic process"/>
    <property type="evidence" value="ECO:0007669"/>
    <property type="project" value="UniProtKB-UniRule"/>
</dbReference>
<dbReference type="CDD" id="cd01995">
    <property type="entry name" value="QueC-like"/>
    <property type="match status" value="1"/>
</dbReference>
<dbReference type="FunFam" id="3.40.50.620:FF:000131">
    <property type="entry name" value="7-cyano-7-deazaguanine synthase"/>
    <property type="match status" value="1"/>
</dbReference>
<dbReference type="Gene3D" id="3.40.50.620">
    <property type="entry name" value="HUPs"/>
    <property type="match status" value="1"/>
</dbReference>
<dbReference type="HAMAP" id="MF_01633">
    <property type="entry name" value="QueC"/>
    <property type="match status" value="1"/>
</dbReference>
<dbReference type="InterPro" id="IPR018317">
    <property type="entry name" value="QueC"/>
</dbReference>
<dbReference type="InterPro" id="IPR014729">
    <property type="entry name" value="Rossmann-like_a/b/a_fold"/>
</dbReference>
<dbReference type="NCBIfam" id="TIGR00364">
    <property type="entry name" value="7-cyano-7-deazaguanine synthase QueC"/>
    <property type="match status" value="1"/>
</dbReference>
<dbReference type="PANTHER" id="PTHR42914">
    <property type="entry name" value="7-CYANO-7-DEAZAGUANINE SYNTHASE"/>
    <property type="match status" value="1"/>
</dbReference>
<dbReference type="PANTHER" id="PTHR42914:SF1">
    <property type="entry name" value="7-CYANO-7-DEAZAGUANINE SYNTHASE"/>
    <property type="match status" value="1"/>
</dbReference>
<dbReference type="Pfam" id="PF06508">
    <property type="entry name" value="QueC"/>
    <property type="match status" value="1"/>
</dbReference>
<dbReference type="PIRSF" id="PIRSF006293">
    <property type="entry name" value="ExsB"/>
    <property type="match status" value="1"/>
</dbReference>
<dbReference type="SUPFAM" id="SSF52402">
    <property type="entry name" value="Adenine nucleotide alpha hydrolases-like"/>
    <property type="match status" value="1"/>
</dbReference>
<reference key="1">
    <citation type="journal article" date="2000" name="Nature">
        <title>The genome sequence of the plant pathogen Xylella fastidiosa.</title>
        <authorList>
            <person name="Simpson A.J.G."/>
            <person name="Reinach F.C."/>
            <person name="Arruda P."/>
            <person name="Abreu F.A."/>
            <person name="Acencio M."/>
            <person name="Alvarenga R."/>
            <person name="Alves L.M.C."/>
            <person name="Araya J.E."/>
            <person name="Baia G.S."/>
            <person name="Baptista C.S."/>
            <person name="Barros M.H."/>
            <person name="Bonaccorsi E.D."/>
            <person name="Bordin S."/>
            <person name="Bove J.M."/>
            <person name="Briones M.R.S."/>
            <person name="Bueno M.R.P."/>
            <person name="Camargo A.A."/>
            <person name="Camargo L.E.A."/>
            <person name="Carraro D.M."/>
            <person name="Carrer H."/>
            <person name="Colauto N.B."/>
            <person name="Colombo C."/>
            <person name="Costa F.F."/>
            <person name="Costa M.C.R."/>
            <person name="Costa-Neto C.M."/>
            <person name="Coutinho L.L."/>
            <person name="Cristofani M."/>
            <person name="Dias-Neto E."/>
            <person name="Docena C."/>
            <person name="El-Dorry H."/>
            <person name="Facincani A.P."/>
            <person name="Ferreira A.J.S."/>
            <person name="Ferreira V.C.A."/>
            <person name="Ferro J.A."/>
            <person name="Fraga J.S."/>
            <person name="Franca S.C."/>
            <person name="Franco M.C."/>
            <person name="Frohme M."/>
            <person name="Furlan L.R."/>
            <person name="Garnier M."/>
            <person name="Goldman G.H."/>
            <person name="Goldman M.H.S."/>
            <person name="Gomes S.L."/>
            <person name="Gruber A."/>
            <person name="Ho P.L."/>
            <person name="Hoheisel J.D."/>
            <person name="Junqueira M.L."/>
            <person name="Kemper E.L."/>
            <person name="Kitajima J.P."/>
            <person name="Krieger J.E."/>
            <person name="Kuramae E.E."/>
            <person name="Laigret F."/>
            <person name="Lambais M.R."/>
            <person name="Leite L.C.C."/>
            <person name="Lemos E.G.M."/>
            <person name="Lemos M.V.F."/>
            <person name="Lopes S.A."/>
            <person name="Lopes C.R."/>
            <person name="Machado J.A."/>
            <person name="Machado M.A."/>
            <person name="Madeira A.M.B.N."/>
            <person name="Madeira H.M.F."/>
            <person name="Marino C.L."/>
            <person name="Marques M.V."/>
            <person name="Martins E.A.L."/>
            <person name="Martins E.M.F."/>
            <person name="Matsukuma A.Y."/>
            <person name="Menck C.F.M."/>
            <person name="Miracca E.C."/>
            <person name="Miyaki C.Y."/>
            <person name="Monteiro-Vitorello C.B."/>
            <person name="Moon D.H."/>
            <person name="Nagai M.A."/>
            <person name="Nascimento A.L.T.O."/>
            <person name="Netto L.E.S."/>
            <person name="Nhani A. Jr."/>
            <person name="Nobrega F.G."/>
            <person name="Nunes L.R."/>
            <person name="Oliveira M.A."/>
            <person name="de Oliveira M.C."/>
            <person name="de Oliveira R.C."/>
            <person name="Palmieri D.A."/>
            <person name="Paris A."/>
            <person name="Peixoto B.R."/>
            <person name="Pereira G.A.G."/>
            <person name="Pereira H.A. Jr."/>
            <person name="Pesquero J.B."/>
            <person name="Quaggio R.B."/>
            <person name="Roberto P.G."/>
            <person name="Rodrigues V."/>
            <person name="de Rosa A.J.M."/>
            <person name="de Rosa V.E. Jr."/>
            <person name="de Sa R.G."/>
            <person name="Santelli R.V."/>
            <person name="Sawasaki H.E."/>
            <person name="da Silva A.C.R."/>
            <person name="da Silva A.M."/>
            <person name="da Silva F.R."/>
            <person name="Silva W.A. Jr."/>
            <person name="da Silveira J.F."/>
            <person name="Silvestri M.L.Z."/>
            <person name="Siqueira W.J."/>
            <person name="de Souza A.A."/>
            <person name="de Souza A.P."/>
            <person name="Terenzi M.F."/>
            <person name="Truffi D."/>
            <person name="Tsai S.M."/>
            <person name="Tsuhako M.H."/>
            <person name="Vallada H."/>
            <person name="Van Sluys M.A."/>
            <person name="Verjovski-Almeida S."/>
            <person name="Vettore A.L."/>
            <person name="Zago M.A."/>
            <person name="Zatz M."/>
            <person name="Meidanis J."/>
            <person name="Setubal J.C."/>
        </authorList>
    </citation>
    <scope>NUCLEOTIDE SEQUENCE [LARGE SCALE GENOMIC DNA]</scope>
    <source>
        <strain>9a5c</strain>
    </source>
</reference>
<accession>Q9PCC3</accession>
<keyword id="KW-0067">ATP-binding</keyword>
<keyword id="KW-0436">Ligase</keyword>
<keyword id="KW-0479">Metal-binding</keyword>
<keyword id="KW-0547">Nucleotide-binding</keyword>
<keyword id="KW-0671">Queuosine biosynthesis</keyword>
<keyword id="KW-0862">Zinc</keyword>
<protein>
    <recommendedName>
        <fullName evidence="1">7-cyano-7-deazaguanine synthase</fullName>
        <ecNumber evidence="1">6.3.4.20</ecNumber>
    </recommendedName>
    <alternativeName>
        <fullName evidence="1">7-cyano-7-carbaguanine synthase</fullName>
    </alternativeName>
    <alternativeName>
        <fullName evidence="1">PreQ(0) synthase</fullName>
    </alternativeName>
    <alternativeName>
        <fullName evidence="1">Queuosine biosynthesis protein QueC</fullName>
    </alternativeName>
</protein>
<comment type="function">
    <text evidence="1">Catalyzes the ATP-dependent conversion of 7-carboxy-7-deazaguanine (CDG) to 7-cyano-7-deazaguanine (preQ(0)).</text>
</comment>
<comment type="catalytic activity">
    <reaction evidence="1">
        <text>7-carboxy-7-deazaguanine + NH4(+) + ATP = 7-cyano-7-deazaguanine + ADP + phosphate + H2O + H(+)</text>
        <dbReference type="Rhea" id="RHEA:27982"/>
        <dbReference type="ChEBI" id="CHEBI:15377"/>
        <dbReference type="ChEBI" id="CHEBI:15378"/>
        <dbReference type="ChEBI" id="CHEBI:28938"/>
        <dbReference type="ChEBI" id="CHEBI:30616"/>
        <dbReference type="ChEBI" id="CHEBI:43474"/>
        <dbReference type="ChEBI" id="CHEBI:45075"/>
        <dbReference type="ChEBI" id="CHEBI:61036"/>
        <dbReference type="ChEBI" id="CHEBI:456216"/>
        <dbReference type="EC" id="6.3.4.20"/>
    </reaction>
</comment>
<comment type="cofactor">
    <cofactor evidence="1">
        <name>Zn(2+)</name>
        <dbReference type="ChEBI" id="CHEBI:29105"/>
    </cofactor>
    <text evidence="1">Binds 1 zinc ion per subunit.</text>
</comment>
<comment type="pathway">
    <text evidence="1">Purine metabolism; 7-cyano-7-deazaguanine biosynthesis.</text>
</comment>
<comment type="similarity">
    <text evidence="1">Belongs to the QueC family.</text>
</comment>
<comment type="sequence caution" evidence="2">
    <conflict type="erroneous initiation">
        <sequence resource="EMBL-CDS" id="AAF84664"/>
    </conflict>
</comment>
<proteinExistence type="inferred from homology"/>
<organism>
    <name type="scientific">Xylella fastidiosa (strain 9a5c)</name>
    <dbReference type="NCBI Taxonomy" id="160492"/>
    <lineage>
        <taxon>Bacteria</taxon>
        <taxon>Pseudomonadati</taxon>
        <taxon>Pseudomonadota</taxon>
        <taxon>Gammaproteobacteria</taxon>
        <taxon>Lysobacterales</taxon>
        <taxon>Lysobacteraceae</taxon>
        <taxon>Xylella</taxon>
    </lineage>
</organism>